<organism>
    <name type="scientific">Debaryomyces hansenii (strain ATCC 36239 / CBS 767 / BCRC 21394 / JCM 1990 / NBRC 0083 / IGC 2968)</name>
    <name type="common">Yeast</name>
    <name type="synonym">Torulaspora hansenii</name>
    <dbReference type="NCBI Taxonomy" id="284592"/>
    <lineage>
        <taxon>Eukaryota</taxon>
        <taxon>Fungi</taxon>
        <taxon>Dikarya</taxon>
        <taxon>Ascomycota</taxon>
        <taxon>Saccharomycotina</taxon>
        <taxon>Pichiomycetes</taxon>
        <taxon>Debaryomycetaceae</taxon>
        <taxon>Debaryomyces</taxon>
    </lineage>
</organism>
<keyword id="KW-1003">Cell membrane</keyword>
<keyword id="KW-0472">Membrane</keyword>
<keyword id="KW-1185">Reference proteome</keyword>
<keyword id="KW-0812">Transmembrane</keyword>
<keyword id="KW-1133">Transmembrane helix</keyword>
<reference key="1">
    <citation type="journal article" date="2004" name="Nature">
        <title>Genome evolution in yeasts.</title>
        <authorList>
            <person name="Dujon B."/>
            <person name="Sherman D."/>
            <person name="Fischer G."/>
            <person name="Durrens P."/>
            <person name="Casaregola S."/>
            <person name="Lafontaine I."/>
            <person name="de Montigny J."/>
            <person name="Marck C."/>
            <person name="Neuveglise C."/>
            <person name="Talla E."/>
            <person name="Goffard N."/>
            <person name="Frangeul L."/>
            <person name="Aigle M."/>
            <person name="Anthouard V."/>
            <person name="Babour A."/>
            <person name="Barbe V."/>
            <person name="Barnay S."/>
            <person name="Blanchin S."/>
            <person name="Beckerich J.-M."/>
            <person name="Beyne E."/>
            <person name="Bleykasten C."/>
            <person name="Boisrame A."/>
            <person name="Boyer J."/>
            <person name="Cattolico L."/>
            <person name="Confanioleri F."/>
            <person name="de Daruvar A."/>
            <person name="Despons L."/>
            <person name="Fabre E."/>
            <person name="Fairhead C."/>
            <person name="Ferry-Dumazet H."/>
            <person name="Groppi A."/>
            <person name="Hantraye F."/>
            <person name="Hennequin C."/>
            <person name="Jauniaux N."/>
            <person name="Joyet P."/>
            <person name="Kachouri R."/>
            <person name="Kerrest A."/>
            <person name="Koszul R."/>
            <person name="Lemaire M."/>
            <person name="Lesur I."/>
            <person name="Ma L."/>
            <person name="Muller H."/>
            <person name="Nicaud J.-M."/>
            <person name="Nikolski M."/>
            <person name="Oztas S."/>
            <person name="Ozier-Kalogeropoulos O."/>
            <person name="Pellenz S."/>
            <person name="Potier S."/>
            <person name="Richard G.-F."/>
            <person name="Straub M.-L."/>
            <person name="Suleau A."/>
            <person name="Swennen D."/>
            <person name="Tekaia F."/>
            <person name="Wesolowski-Louvel M."/>
            <person name="Westhof E."/>
            <person name="Wirth B."/>
            <person name="Zeniou-Meyer M."/>
            <person name="Zivanovic Y."/>
            <person name="Bolotin-Fukuhara M."/>
            <person name="Thierry A."/>
            <person name="Bouchier C."/>
            <person name="Caudron B."/>
            <person name="Scarpelli C."/>
            <person name="Gaillardin C."/>
            <person name="Weissenbach J."/>
            <person name="Wincker P."/>
            <person name="Souciet J.-L."/>
        </authorList>
    </citation>
    <scope>NUCLEOTIDE SEQUENCE [LARGE SCALE GENOMIC DNA]</scope>
    <source>
        <strain>ATCC 36239 / CBS 767 / BCRC 21394 / JCM 1990 / NBRC 0083 / IGC 2968</strain>
    </source>
</reference>
<gene>
    <name type="primary">PMP3</name>
    <name type="ordered locus">DEHA2C01320g</name>
</gene>
<protein>
    <recommendedName>
        <fullName>Plasma membrane proteolipid 3</fullName>
    </recommendedName>
</protein>
<dbReference type="EMBL" id="CR382135">
    <property type="protein sequence ID" value="CAG85767.1"/>
    <property type="molecule type" value="Genomic_DNA"/>
</dbReference>
<dbReference type="RefSeq" id="XP_457739.1">
    <property type="nucleotide sequence ID" value="XM_457739.1"/>
</dbReference>
<dbReference type="SMR" id="Q6BVN0"/>
<dbReference type="STRING" id="284592.Q6BVN0"/>
<dbReference type="GeneID" id="2900580"/>
<dbReference type="KEGG" id="dha:DEHA2C01320g"/>
<dbReference type="VEuPathDB" id="FungiDB:DEHA2C01320g"/>
<dbReference type="eggNOG" id="KOG1773">
    <property type="taxonomic scope" value="Eukaryota"/>
</dbReference>
<dbReference type="HOGENOM" id="CLU_107649_6_2_1"/>
<dbReference type="InParanoid" id="Q6BVN0"/>
<dbReference type="OMA" id="VHAIWVI"/>
<dbReference type="OrthoDB" id="2802411at2759"/>
<dbReference type="Proteomes" id="UP000000599">
    <property type="component" value="Chromosome C"/>
</dbReference>
<dbReference type="GO" id="GO:0005886">
    <property type="term" value="C:plasma membrane"/>
    <property type="evidence" value="ECO:0007669"/>
    <property type="project" value="UniProtKB-SubCell"/>
</dbReference>
<dbReference type="InterPro" id="IPR000612">
    <property type="entry name" value="PMP3"/>
</dbReference>
<dbReference type="PANTHER" id="PTHR21659">
    <property type="entry name" value="HYDROPHOBIC PROTEIN RCI2 LOW TEMPERATURE AND SALT RESPONSIVE PROTEIN LTI6 -RELATED"/>
    <property type="match status" value="1"/>
</dbReference>
<dbReference type="PANTHER" id="PTHR21659:SF42">
    <property type="entry name" value="UPF0057 MEMBRANE PROTEIN ZK632.10-RELATED"/>
    <property type="match status" value="1"/>
</dbReference>
<dbReference type="Pfam" id="PF01679">
    <property type="entry name" value="Pmp3"/>
    <property type="match status" value="1"/>
</dbReference>
<dbReference type="PROSITE" id="PS01309">
    <property type="entry name" value="UPF0057"/>
    <property type="match status" value="1"/>
</dbReference>
<evidence type="ECO:0000250" key="1"/>
<evidence type="ECO:0000255" key="2"/>
<evidence type="ECO:0000305" key="3"/>
<feature type="chain" id="PRO_0000247911" description="Plasma membrane proteolipid 3">
    <location>
        <begin position="1"/>
        <end position="57"/>
    </location>
</feature>
<feature type="transmembrane region" description="Helical" evidence="2">
    <location>
        <begin position="3"/>
        <end position="23"/>
    </location>
</feature>
<feature type="transmembrane region" description="Helical" evidence="2">
    <location>
        <begin position="34"/>
        <end position="54"/>
    </location>
</feature>
<name>PMP3_DEBHA</name>
<accession>Q6BVN0</accession>
<sequence length="57" mass="6356">MAFTCSDIFKIIIAIILPPLGVFLERGCASSFWINIVLTILGYIPGIIHALYVILKY</sequence>
<proteinExistence type="inferred from homology"/>
<comment type="function">
    <text evidence="1">Plays a role in the regulation of membrane potential. Could mediate a proton leak (By similarity).</text>
</comment>
<comment type="subcellular location">
    <subcellularLocation>
        <location evidence="3">Cell membrane</location>
        <topology evidence="3">Multi-pass membrane protein</topology>
    </subcellularLocation>
</comment>
<comment type="similarity">
    <text evidence="3">Belongs to the UPF0057 (PMP3) family.</text>
</comment>